<keyword id="KW-0007">Acetylation</keyword>
<keyword id="KW-0238">DNA-binding</keyword>
<keyword id="KW-0509">mRNA transport</keyword>
<keyword id="KW-0539">Nucleus</keyword>
<keyword id="KW-0694">RNA-binding</keyword>
<keyword id="KW-0813">Transport</keyword>
<sequence length="203" mass="23797">MDKAFDEIIGNSHTDSSSNHKVTRYRRRDLRNELGPRLGFAPSDAASRSKDRLYREREEPPLPKRIRISKIPLDVSDYTLDDMIKEFGSPIFSKIFDNKEDRTCIYEFEDPEVLEKIVERYNGHELHNAKIEVEIYQPQRKHSRMNAHNRRKQTAQEQGRGRPGSHYRQRPNRVSKKNKGREKNNTPTSVEALDAELDAYMKG</sequence>
<accession>B3LQP5</accession>
<name>YRA2_YEAS1</name>
<feature type="chain" id="PRO_0000409542" description="RNA annealing protein YRA2">
    <location>
        <begin position="1"/>
        <end position="203"/>
    </location>
</feature>
<feature type="domain" description="RRM" evidence="3">
    <location>
        <begin position="64"/>
        <end position="138"/>
    </location>
</feature>
<feature type="region of interest" description="Disordered" evidence="4">
    <location>
        <begin position="1"/>
        <end position="60"/>
    </location>
</feature>
<feature type="region of interest" description="Disordered" evidence="4">
    <location>
        <begin position="134"/>
        <end position="203"/>
    </location>
</feature>
<feature type="compositionally biased region" description="Polar residues" evidence="4">
    <location>
        <begin position="11"/>
        <end position="20"/>
    </location>
</feature>
<feature type="compositionally biased region" description="Basic and acidic residues" evidence="4">
    <location>
        <begin position="47"/>
        <end position="60"/>
    </location>
</feature>
<feature type="compositionally biased region" description="Basic residues" evidence="4">
    <location>
        <begin position="139"/>
        <end position="153"/>
    </location>
</feature>
<feature type="compositionally biased region" description="Basic residues" evidence="4">
    <location>
        <begin position="163"/>
        <end position="180"/>
    </location>
</feature>
<feature type="modified residue" description="N-acetylmethionine" evidence="2">
    <location>
        <position position="1"/>
    </location>
</feature>
<comment type="function">
    <text evidence="1">Involved in export of poly(A) mRNAs from the nucleus. Recruited to the coding sequences as well as poly-A sites of active genes (By similarity).</text>
</comment>
<comment type="subunit">
    <text evidence="1">Associates with mRNPs. Interacts with YRA1.</text>
</comment>
<comment type="subcellular location">
    <subcellularLocation>
        <location evidence="1">Nucleus</location>
    </subcellularLocation>
</comment>
<comment type="similarity">
    <text evidence="5">Belongs to the YRA1 family.</text>
</comment>
<proteinExistence type="inferred from homology"/>
<organism>
    <name type="scientific">Saccharomyces cerevisiae (strain RM11-1a)</name>
    <name type="common">Baker's yeast</name>
    <dbReference type="NCBI Taxonomy" id="285006"/>
    <lineage>
        <taxon>Eukaryota</taxon>
        <taxon>Fungi</taxon>
        <taxon>Dikarya</taxon>
        <taxon>Ascomycota</taxon>
        <taxon>Saccharomycotina</taxon>
        <taxon>Saccharomycetes</taxon>
        <taxon>Saccharomycetales</taxon>
        <taxon>Saccharomycetaceae</taxon>
        <taxon>Saccharomyces</taxon>
    </lineage>
</organism>
<protein>
    <recommendedName>
        <fullName>RNA annealing protein YRA2</fullName>
    </recommendedName>
</protein>
<dbReference type="EMBL" id="CH408051">
    <property type="protein sequence ID" value="EDV12898.1"/>
    <property type="molecule type" value="Genomic_DNA"/>
</dbReference>
<dbReference type="SMR" id="B3LQP5"/>
<dbReference type="HOGENOM" id="CLU_111217_0_0_1"/>
<dbReference type="OrthoDB" id="39322at4893"/>
<dbReference type="Proteomes" id="UP000008335">
    <property type="component" value="Unassembled WGS sequence"/>
</dbReference>
<dbReference type="GO" id="GO:0005634">
    <property type="term" value="C:nucleus"/>
    <property type="evidence" value="ECO:0007669"/>
    <property type="project" value="UniProtKB-SubCell"/>
</dbReference>
<dbReference type="GO" id="GO:0003677">
    <property type="term" value="F:DNA binding"/>
    <property type="evidence" value="ECO:0007669"/>
    <property type="project" value="UniProtKB-KW"/>
</dbReference>
<dbReference type="GO" id="GO:0003723">
    <property type="term" value="F:RNA binding"/>
    <property type="evidence" value="ECO:0007669"/>
    <property type="project" value="UniProtKB-KW"/>
</dbReference>
<dbReference type="GO" id="GO:0051028">
    <property type="term" value="P:mRNA transport"/>
    <property type="evidence" value="ECO:0007669"/>
    <property type="project" value="UniProtKB-KW"/>
</dbReference>
<dbReference type="CDD" id="cd12295">
    <property type="entry name" value="RRM_YRA2"/>
    <property type="match status" value="1"/>
</dbReference>
<dbReference type="FunFam" id="3.30.70.330:FF:000793">
    <property type="entry name" value="RNA annealing protein YRA2"/>
    <property type="match status" value="1"/>
</dbReference>
<dbReference type="Gene3D" id="3.30.70.330">
    <property type="match status" value="1"/>
</dbReference>
<dbReference type="InterPro" id="IPR025715">
    <property type="entry name" value="FoP_C"/>
</dbReference>
<dbReference type="InterPro" id="IPR012677">
    <property type="entry name" value="Nucleotide-bd_a/b_plait_sf"/>
</dbReference>
<dbReference type="InterPro" id="IPR035979">
    <property type="entry name" value="RBD_domain_sf"/>
</dbReference>
<dbReference type="InterPro" id="IPR000504">
    <property type="entry name" value="RRM_dom"/>
</dbReference>
<dbReference type="InterPro" id="IPR034396">
    <property type="entry name" value="Yra2_RRM"/>
</dbReference>
<dbReference type="Pfam" id="PF13865">
    <property type="entry name" value="FoP_duplication"/>
    <property type="match status" value="1"/>
</dbReference>
<dbReference type="Pfam" id="PF00076">
    <property type="entry name" value="RRM_1"/>
    <property type="match status" value="1"/>
</dbReference>
<dbReference type="SMART" id="SM00360">
    <property type="entry name" value="RRM"/>
    <property type="match status" value="1"/>
</dbReference>
<dbReference type="SUPFAM" id="SSF54928">
    <property type="entry name" value="RNA-binding domain, RBD"/>
    <property type="match status" value="1"/>
</dbReference>
<dbReference type="PROSITE" id="PS50102">
    <property type="entry name" value="RRM"/>
    <property type="match status" value="1"/>
</dbReference>
<reference key="1">
    <citation type="submission" date="2005-03" db="EMBL/GenBank/DDBJ databases">
        <title>Annotation of the Saccharomyces cerevisiae RM11-1a genome.</title>
        <authorList>
            <consortium name="The Broad Institute Genome Sequencing Platform"/>
            <person name="Birren B.W."/>
            <person name="Lander E.S."/>
            <person name="Galagan J.E."/>
            <person name="Nusbaum C."/>
            <person name="Devon K."/>
            <person name="Cuomo C."/>
            <person name="Jaffe D.B."/>
            <person name="Butler J."/>
            <person name="Alvarez P."/>
            <person name="Gnerre S."/>
            <person name="Grabherr M."/>
            <person name="Kleber M."/>
            <person name="Mauceli E.W."/>
            <person name="Brockman W."/>
            <person name="MacCallum I.A."/>
            <person name="Rounsley S."/>
            <person name="Young S.K."/>
            <person name="LaButti K."/>
            <person name="Pushparaj V."/>
            <person name="DeCaprio D."/>
            <person name="Crawford M."/>
            <person name="Koehrsen M."/>
            <person name="Engels R."/>
            <person name="Montgomery P."/>
            <person name="Pearson M."/>
            <person name="Howarth C."/>
            <person name="Larson L."/>
            <person name="Luoma S."/>
            <person name="White J."/>
            <person name="O'Leary S."/>
            <person name="Kodira C.D."/>
            <person name="Zeng Q."/>
            <person name="Yandava C."/>
            <person name="Alvarado L."/>
            <person name="Pratt S."/>
            <person name="Kruglyak L."/>
        </authorList>
    </citation>
    <scope>NUCLEOTIDE SEQUENCE [LARGE SCALE GENOMIC DNA]</scope>
    <source>
        <strain>RM11-1a</strain>
    </source>
</reference>
<evidence type="ECO:0000250" key="1"/>
<evidence type="ECO:0000250" key="2">
    <source>
        <dbReference type="UniProtKB" id="P36036"/>
    </source>
</evidence>
<evidence type="ECO:0000255" key="3">
    <source>
        <dbReference type="PROSITE-ProRule" id="PRU00176"/>
    </source>
</evidence>
<evidence type="ECO:0000256" key="4">
    <source>
        <dbReference type="SAM" id="MobiDB-lite"/>
    </source>
</evidence>
<evidence type="ECO:0000305" key="5"/>
<gene>
    <name type="primary">YRA2</name>
    <name type="ORF">SCRG_03817</name>
</gene>